<comment type="function">
    <text evidence="1">Catalyzes the condensation of carbamoyl phosphate and aspartate to form carbamoyl aspartate and inorganic phosphate, the committed step in the de novo pyrimidine nucleotide biosynthesis pathway.</text>
</comment>
<comment type="catalytic activity">
    <reaction evidence="1">
        <text>carbamoyl phosphate + L-aspartate = N-carbamoyl-L-aspartate + phosphate + H(+)</text>
        <dbReference type="Rhea" id="RHEA:20013"/>
        <dbReference type="ChEBI" id="CHEBI:15378"/>
        <dbReference type="ChEBI" id="CHEBI:29991"/>
        <dbReference type="ChEBI" id="CHEBI:32814"/>
        <dbReference type="ChEBI" id="CHEBI:43474"/>
        <dbReference type="ChEBI" id="CHEBI:58228"/>
        <dbReference type="EC" id="2.1.3.2"/>
    </reaction>
</comment>
<comment type="pathway">
    <text evidence="1">Pyrimidine metabolism; UMP biosynthesis via de novo pathway; (S)-dihydroorotate from bicarbonate: step 2/3.</text>
</comment>
<comment type="subunit">
    <text evidence="1">Heterododecamer (2C3:3R2) of six catalytic PyrB chains organized as two trimers (C3), and six regulatory PyrI chains organized as three dimers (R2).</text>
</comment>
<comment type="similarity">
    <text evidence="1">Belongs to the aspartate/ornithine carbamoyltransferase superfamily. ATCase family.</text>
</comment>
<keyword id="KW-0665">Pyrimidine biosynthesis</keyword>
<keyword id="KW-1185">Reference proteome</keyword>
<keyword id="KW-0808">Transferase</keyword>
<organism>
    <name type="scientific">Rhizobium etli (strain ATCC 51251 / DSM 11541 / JCM 21823 / NBRC 15573 / CFN 42)</name>
    <dbReference type="NCBI Taxonomy" id="347834"/>
    <lineage>
        <taxon>Bacteria</taxon>
        <taxon>Pseudomonadati</taxon>
        <taxon>Pseudomonadota</taxon>
        <taxon>Alphaproteobacteria</taxon>
        <taxon>Hyphomicrobiales</taxon>
        <taxon>Rhizobiaceae</taxon>
        <taxon>Rhizobium/Agrobacterium group</taxon>
        <taxon>Rhizobium</taxon>
    </lineage>
</organism>
<feature type="chain" id="PRO_0000321148" description="Aspartate carbamoyltransferase catalytic subunit">
    <location>
        <begin position="1"/>
        <end position="318"/>
    </location>
</feature>
<feature type="binding site" evidence="1">
    <location>
        <position position="59"/>
    </location>
    <ligand>
        <name>carbamoyl phosphate</name>
        <dbReference type="ChEBI" id="CHEBI:58228"/>
    </ligand>
</feature>
<feature type="binding site" evidence="1">
    <location>
        <position position="60"/>
    </location>
    <ligand>
        <name>carbamoyl phosphate</name>
        <dbReference type="ChEBI" id="CHEBI:58228"/>
    </ligand>
</feature>
<feature type="binding site" evidence="1">
    <location>
        <position position="87"/>
    </location>
    <ligand>
        <name>L-aspartate</name>
        <dbReference type="ChEBI" id="CHEBI:29991"/>
    </ligand>
</feature>
<feature type="binding site" evidence="1">
    <location>
        <position position="109"/>
    </location>
    <ligand>
        <name>carbamoyl phosphate</name>
        <dbReference type="ChEBI" id="CHEBI:58228"/>
    </ligand>
</feature>
<feature type="binding site" evidence="1">
    <location>
        <position position="137"/>
    </location>
    <ligand>
        <name>carbamoyl phosphate</name>
        <dbReference type="ChEBI" id="CHEBI:58228"/>
    </ligand>
</feature>
<feature type="binding site" evidence="1">
    <location>
        <position position="140"/>
    </location>
    <ligand>
        <name>carbamoyl phosphate</name>
        <dbReference type="ChEBI" id="CHEBI:58228"/>
    </ligand>
</feature>
<feature type="binding site" evidence="1">
    <location>
        <position position="170"/>
    </location>
    <ligand>
        <name>L-aspartate</name>
        <dbReference type="ChEBI" id="CHEBI:29991"/>
    </ligand>
</feature>
<feature type="binding site" evidence="1">
    <location>
        <position position="224"/>
    </location>
    <ligand>
        <name>L-aspartate</name>
        <dbReference type="ChEBI" id="CHEBI:29991"/>
    </ligand>
</feature>
<feature type="binding site" evidence="1">
    <location>
        <position position="265"/>
    </location>
    <ligand>
        <name>carbamoyl phosphate</name>
        <dbReference type="ChEBI" id="CHEBI:58228"/>
    </ligand>
</feature>
<feature type="binding site" evidence="1">
    <location>
        <position position="266"/>
    </location>
    <ligand>
        <name>carbamoyl phosphate</name>
        <dbReference type="ChEBI" id="CHEBI:58228"/>
    </ligand>
</feature>
<proteinExistence type="inferred from homology"/>
<name>PYRB_RHIEC</name>
<reference key="1">
    <citation type="journal article" date="2006" name="Proc. Natl. Acad. Sci. U.S.A.">
        <title>The partitioned Rhizobium etli genome: genetic and metabolic redundancy in seven interacting replicons.</title>
        <authorList>
            <person name="Gonzalez V."/>
            <person name="Santamaria R.I."/>
            <person name="Bustos P."/>
            <person name="Hernandez-Gonzalez I."/>
            <person name="Medrano-Soto A."/>
            <person name="Moreno-Hagelsieb G."/>
            <person name="Janga S.C."/>
            <person name="Ramirez M.A."/>
            <person name="Jimenez-Jacinto V."/>
            <person name="Collado-Vides J."/>
            <person name="Davila G."/>
        </authorList>
    </citation>
    <scope>NUCLEOTIDE SEQUENCE [LARGE SCALE GENOMIC DNA]</scope>
    <source>
        <strain>ATCC 51251 / DSM 11541 / JCM 21823 / NBRC 15573 / CFN 42</strain>
    </source>
</reference>
<dbReference type="EC" id="2.1.3.2" evidence="1"/>
<dbReference type="EMBL" id="CP000133">
    <property type="protein sequence ID" value="ABC90441.1"/>
    <property type="molecule type" value="Genomic_DNA"/>
</dbReference>
<dbReference type="RefSeq" id="WP_011424957.1">
    <property type="nucleotide sequence ID" value="NC_007761.1"/>
</dbReference>
<dbReference type="SMR" id="Q2K9P5"/>
<dbReference type="KEGG" id="ret:RHE_CH01642"/>
<dbReference type="eggNOG" id="COG0540">
    <property type="taxonomic scope" value="Bacteria"/>
</dbReference>
<dbReference type="HOGENOM" id="CLU_043846_2_0_5"/>
<dbReference type="OrthoDB" id="9774690at2"/>
<dbReference type="UniPathway" id="UPA00070">
    <property type="reaction ID" value="UER00116"/>
</dbReference>
<dbReference type="Proteomes" id="UP000001936">
    <property type="component" value="Chromosome"/>
</dbReference>
<dbReference type="GO" id="GO:0005829">
    <property type="term" value="C:cytosol"/>
    <property type="evidence" value="ECO:0007669"/>
    <property type="project" value="TreeGrafter"/>
</dbReference>
<dbReference type="GO" id="GO:0016597">
    <property type="term" value="F:amino acid binding"/>
    <property type="evidence" value="ECO:0007669"/>
    <property type="project" value="InterPro"/>
</dbReference>
<dbReference type="GO" id="GO:0004070">
    <property type="term" value="F:aspartate carbamoyltransferase activity"/>
    <property type="evidence" value="ECO:0007669"/>
    <property type="project" value="UniProtKB-UniRule"/>
</dbReference>
<dbReference type="GO" id="GO:0006207">
    <property type="term" value="P:'de novo' pyrimidine nucleobase biosynthetic process"/>
    <property type="evidence" value="ECO:0007669"/>
    <property type="project" value="InterPro"/>
</dbReference>
<dbReference type="GO" id="GO:0044205">
    <property type="term" value="P:'de novo' UMP biosynthetic process"/>
    <property type="evidence" value="ECO:0007669"/>
    <property type="project" value="UniProtKB-UniRule"/>
</dbReference>
<dbReference type="GO" id="GO:0006520">
    <property type="term" value="P:amino acid metabolic process"/>
    <property type="evidence" value="ECO:0007669"/>
    <property type="project" value="InterPro"/>
</dbReference>
<dbReference type="FunFam" id="3.40.50.1370:FF:000007">
    <property type="entry name" value="Aspartate carbamoyltransferase"/>
    <property type="match status" value="1"/>
</dbReference>
<dbReference type="Gene3D" id="3.40.50.1370">
    <property type="entry name" value="Aspartate/ornithine carbamoyltransferase"/>
    <property type="match status" value="2"/>
</dbReference>
<dbReference type="HAMAP" id="MF_00001">
    <property type="entry name" value="Asp_carb_tr"/>
    <property type="match status" value="1"/>
</dbReference>
<dbReference type="InterPro" id="IPR006132">
    <property type="entry name" value="Asp/Orn_carbamoyltranf_P-bd"/>
</dbReference>
<dbReference type="InterPro" id="IPR006130">
    <property type="entry name" value="Asp/Orn_carbamoylTrfase"/>
</dbReference>
<dbReference type="InterPro" id="IPR036901">
    <property type="entry name" value="Asp/Orn_carbamoylTrfase_sf"/>
</dbReference>
<dbReference type="InterPro" id="IPR002082">
    <property type="entry name" value="Asp_carbamoyltransf"/>
</dbReference>
<dbReference type="InterPro" id="IPR006131">
    <property type="entry name" value="Asp_carbamoyltransf_Asp/Orn-bd"/>
</dbReference>
<dbReference type="NCBIfam" id="TIGR00670">
    <property type="entry name" value="asp_carb_tr"/>
    <property type="match status" value="1"/>
</dbReference>
<dbReference type="NCBIfam" id="NF002032">
    <property type="entry name" value="PRK00856.1"/>
    <property type="match status" value="1"/>
</dbReference>
<dbReference type="PANTHER" id="PTHR45753:SF6">
    <property type="entry name" value="ASPARTATE CARBAMOYLTRANSFERASE"/>
    <property type="match status" value="1"/>
</dbReference>
<dbReference type="PANTHER" id="PTHR45753">
    <property type="entry name" value="ORNITHINE CARBAMOYLTRANSFERASE, MITOCHONDRIAL"/>
    <property type="match status" value="1"/>
</dbReference>
<dbReference type="Pfam" id="PF00185">
    <property type="entry name" value="OTCace"/>
    <property type="match status" value="1"/>
</dbReference>
<dbReference type="Pfam" id="PF02729">
    <property type="entry name" value="OTCace_N"/>
    <property type="match status" value="1"/>
</dbReference>
<dbReference type="PRINTS" id="PR00100">
    <property type="entry name" value="AOTCASE"/>
</dbReference>
<dbReference type="PRINTS" id="PR00101">
    <property type="entry name" value="ATCASE"/>
</dbReference>
<dbReference type="SUPFAM" id="SSF53671">
    <property type="entry name" value="Aspartate/ornithine carbamoyltransferase"/>
    <property type="match status" value="1"/>
</dbReference>
<dbReference type="PROSITE" id="PS00097">
    <property type="entry name" value="CARBAMOYLTRANSFERASE"/>
    <property type="match status" value="1"/>
</dbReference>
<gene>
    <name evidence="1" type="primary">pyrB</name>
    <name type="ordered locus">RHE_CH01642</name>
</gene>
<sequence>MVFFPHRHLIGIKGLTEQDITYLLDKADEAVKISRRREKKTSTLRGLTQINLFFEASTRTQASFELAGKRLGADVMNMSVGNSSVKKGETLIDTAMTLNAMRPDVLVIRHSSAGAAALLAQKVSCSVVNAGDGQHEHPTQALLDALTIRRAKGKLSRIIVAICGDVLHSRVARSNILLLNAMGARVRVVAPATLLPAGIAEMGVEVFHSMKEGLKDADVVMMLRLQRERMSGAFVPSVREYYHFYGLDAETLKAAKDDALVMHPGPMNRGVEIASEVADGPQSVIAEQVEMGVAVRMAVMETLLVSQNQGPRTDGMMA</sequence>
<evidence type="ECO:0000255" key="1">
    <source>
        <dbReference type="HAMAP-Rule" id="MF_00001"/>
    </source>
</evidence>
<protein>
    <recommendedName>
        <fullName evidence="1">Aspartate carbamoyltransferase catalytic subunit</fullName>
        <ecNumber evidence="1">2.1.3.2</ecNumber>
    </recommendedName>
    <alternativeName>
        <fullName evidence="1">Aspartate transcarbamylase</fullName>
        <shortName evidence="1">ATCase</shortName>
    </alternativeName>
</protein>
<accession>Q2K9P5</accession>